<accession>Q5W6D6</accession>
<accession>A0A0P0WKZ2</accession>
<proteinExistence type="evidence at transcript level"/>
<organism>
    <name type="scientific">Oryza sativa subsp. japonica</name>
    <name type="common">Rice</name>
    <dbReference type="NCBI Taxonomy" id="39947"/>
    <lineage>
        <taxon>Eukaryota</taxon>
        <taxon>Viridiplantae</taxon>
        <taxon>Streptophyta</taxon>
        <taxon>Embryophyta</taxon>
        <taxon>Tracheophyta</taxon>
        <taxon>Spermatophyta</taxon>
        <taxon>Magnoliopsida</taxon>
        <taxon>Liliopsida</taxon>
        <taxon>Poales</taxon>
        <taxon>Poaceae</taxon>
        <taxon>BOP clade</taxon>
        <taxon>Oryzoideae</taxon>
        <taxon>Oryzeae</taxon>
        <taxon>Oryzinae</taxon>
        <taxon>Oryza</taxon>
        <taxon>Oryza sativa</taxon>
    </lineage>
</organism>
<protein>
    <recommendedName>
        <fullName evidence="11">Transcription factor WRKY45-1</fullName>
        <shortName evidence="11">OsWRKY45-1</shortName>
    </recommendedName>
    <alternativeName>
        <fullName evidence="10">OsWRKY45</fullName>
    </alternativeName>
    <alternativeName>
        <fullName evidence="11">WRKY transcription factor 45-2</fullName>
    </alternativeName>
</protein>
<gene>
    <name evidence="11" type="primary">WRKY45-1</name>
    <name evidence="10" type="synonym">WRKY45</name>
    <name evidence="17" type="ordered locus">Os05g0322900</name>
    <name evidence="12" type="ordered locus">LOC_Os05g25770</name>
    <name evidence="15" type="ORF">OSJNBb0109A13.9</name>
    <name evidence="16" type="ORF">P0018A03.1</name>
</gene>
<sequence length="326" mass="33988">MTSSMSPAPAPAYAQVMEDMEKGKELAAQLQGLLRDSPEAGRFVDQILHTFSRAMRALDKAAVSAAGGEGSEVQSEVTCGGGASAGGKRKAPAADRKANCRRRTQQSSGNSVVVKNLDDGQAWRKYGQKEIQNSKHPKAYFRCTHKYDQLCTAQRQVQRCDDDPASYRVTYIGEHTCRDPATAPIIAAHVIHQVAAGDNDDGCGGLQAGSRLISFVAAPAAPVDAAAAPTTSTITTVTAPGPLLQPLKVEGGVGSSDQEEVLSSLTPGSSAARGGGGGGGVAGPFGPDQGDVTSSLHWSYDAVAGMEFFKNDEVVFDLDDIMGLSF</sequence>
<name>WR451_ORYSJ</name>
<comment type="function">
    <text evidence="5 6 7 8 9">Transcriptional activator involved in defense responses against pathogens (PubMed:17601827, PubMed:19700558, PubMed:21726399). Acts as a positive regulator of defense responses against the rice blast fungus Magnaporthe oryzae (PubMed:17601827, PubMed:19700558, PubMed:21726399). Acts through W-boxes, which are cis-elements that are enriched in the promoters of several defense-related genes (PubMed:17601827). Plays an important role in the benzothiadiazole-induced disease resistance by mediating salicylic acid (SA) defense signaling pathway, independently of the disease resistance gene NPR1/NH1 (PubMed:17601827, PubMed:21726399). Acts as a negative regulator of defense responses against the bacterial blight Xanthomonas oryzae pv oryzae (Xoo) and the bacterial streak Xanthomonas oryzae pv oryzicola (Xoc) (PubMed:19700558). Acts downstream of abscisic acid (ABA) signaling in response to the rice blast fungus (PubMed:20459318). ABA is a negative regulator of defense responses that interacts antagonistically with salicylic acid (SA) signaling pathway (PubMed:20459318). Acts as a negative regulator of ABA signaling that suppresses growth of seedlings (PubMed:21725029). Does not seem to be involved in the regulation of salt stress response (PubMed:21725029). Acts as a negative regulator of cold stress response (PubMed:21725029). Acts as a negative regulator of drought stress response (PubMed:21725029).</text>
</comment>
<comment type="subcellular location">
    <subcellularLocation>
        <location evidence="1">Nucleus</location>
    </subcellularLocation>
</comment>
<comment type="tissue specificity">
    <text evidence="3">Expressed in aleurone cells.</text>
</comment>
<comment type="induction">
    <text evidence="3 4 5 8">Induced by abscisic acid (ABA) in aleurone cells (PubMed:15618416). Induced by salicylic acid (SA) and infection with the rice blast fungus Magnaporthe oryzae (PubMed:16528562). Induced by benzothiadiazole (BTH) and salicylic acid (SA) (PubMed:17601827). Induced by cold stress (PubMed:21725029). Down-regulated by drought stress (PubMed:21725029).</text>
</comment>
<comment type="disruption phenotype">
    <text evidence="5 6">No visible phenotype under normal growth conditions, but mutant plants are compromised in benzothiadiazole-induced resistance to the rice blast fungus Magnaporthe oryzae (PubMed:17601827). Enhanced resistance to the bacterial blight Xanthomonas oryzae pv oryzae (Xoo) and the bacterial streak Xanthomonas oryzae pv oryzicola (Xoc) (PubMed:19700558). Enhanced resistance to bacterial pathogens is associated with increased accumulation of salicylic acid (SA) and jasmonate (JA) (PubMed:19700558).</text>
</comment>
<comment type="miscellaneous">
    <text evidence="5 6">Plants overexpressing WRKY45 exhibit enhanced resistance to the rice blast fungus Magnaporthe oryzae (PubMed:17601827, PubMed:19700558). Plants overexpressing WRKY45 exhibit increased susceptibility to the bacterial blight Xanthomonas oryzae pv oryzae (Xoo) and the bacterial streak Xanthomonas oryzae pv oryzicola (Xoc) (PubMed:19700558).</text>
</comment>
<comment type="similarity">
    <text evidence="12">Belongs to the WRKY group III family.</text>
</comment>
<comment type="caution">
    <text evidence="13 14">Rice plants contain two different alleles of WRKY45, WRKY45-1 (AC Q5W6D6) and WRKY45-2 (AC B8AWM1), which play similar and opposite roles in defense response, response to abscisic acid (ABA) and response to abiotic stresses.</text>
</comment>
<evidence type="ECO:0000255" key="1">
    <source>
        <dbReference type="PROSITE-ProRule" id="PRU00223"/>
    </source>
</evidence>
<evidence type="ECO:0000256" key="2">
    <source>
        <dbReference type="SAM" id="MobiDB-lite"/>
    </source>
</evidence>
<evidence type="ECO:0000269" key="3">
    <source>
    </source>
</evidence>
<evidence type="ECO:0000269" key="4">
    <source>
    </source>
</evidence>
<evidence type="ECO:0000269" key="5">
    <source>
    </source>
</evidence>
<evidence type="ECO:0000269" key="6">
    <source>
    </source>
</evidence>
<evidence type="ECO:0000269" key="7">
    <source>
    </source>
</evidence>
<evidence type="ECO:0000269" key="8">
    <source>
    </source>
</evidence>
<evidence type="ECO:0000269" key="9">
    <source>
    </source>
</evidence>
<evidence type="ECO:0000303" key="10">
    <source>
    </source>
</evidence>
<evidence type="ECO:0000303" key="11">
    <source>
    </source>
</evidence>
<evidence type="ECO:0000305" key="12"/>
<evidence type="ECO:0000305" key="13">
    <source>
    </source>
</evidence>
<evidence type="ECO:0000305" key="14">
    <source>
    </source>
</evidence>
<evidence type="ECO:0000312" key="15">
    <source>
        <dbReference type="EMBL" id="AAV44133.1"/>
    </source>
</evidence>
<evidence type="ECO:0000312" key="16">
    <source>
        <dbReference type="EMBL" id="AAV44172.1"/>
    </source>
</evidence>
<evidence type="ECO:0000312" key="17">
    <source>
        <dbReference type="EMBL" id="BAS93366.1"/>
    </source>
</evidence>
<keyword id="KW-0010">Activator</keyword>
<keyword id="KW-0238">DNA-binding</keyword>
<keyword id="KW-0539">Nucleus</keyword>
<keyword id="KW-0611">Plant defense</keyword>
<keyword id="KW-1185">Reference proteome</keyword>
<keyword id="KW-0346">Stress response</keyword>
<keyword id="KW-0804">Transcription</keyword>
<keyword id="KW-0805">Transcription regulation</keyword>
<dbReference type="EMBL" id="AY870611">
    <property type="protein sequence ID" value="AAW63720.1"/>
    <property type="molecule type" value="mRNA"/>
</dbReference>
<dbReference type="EMBL" id="GQ331930">
    <property type="protein sequence ID" value="ACX37128.1"/>
    <property type="molecule type" value="Genomic_DNA"/>
</dbReference>
<dbReference type="EMBL" id="GQ331931">
    <property type="protein sequence ID" value="ACX37129.1"/>
    <property type="molecule type" value="Genomic_DNA"/>
</dbReference>
<dbReference type="EMBL" id="GQ331932">
    <property type="protein sequence ID" value="ACX37130.1"/>
    <property type="molecule type" value="Genomic_DNA"/>
</dbReference>
<dbReference type="EMBL" id="AC136227">
    <property type="protein sequence ID" value="AAV44133.1"/>
    <property type="molecule type" value="Genomic_DNA"/>
</dbReference>
<dbReference type="EMBL" id="AC134346">
    <property type="protein sequence ID" value="AAV44172.1"/>
    <property type="molecule type" value="Genomic_DNA"/>
</dbReference>
<dbReference type="EMBL" id="AP008211">
    <property type="protein sequence ID" value="BAF17106.1"/>
    <property type="molecule type" value="Genomic_DNA"/>
</dbReference>
<dbReference type="EMBL" id="AP014961">
    <property type="protein sequence ID" value="BAS93366.1"/>
    <property type="molecule type" value="Genomic_DNA"/>
</dbReference>
<dbReference type="EMBL" id="AK066255">
    <property type="protein sequence ID" value="BAG89885.1"/>
    <property type="molecule type" value="mRNA"/>
</dbReference>
<dbReference type="EMBL" id="AK103959">
    <property type="protein sequence ID" value="BAG96342.1"/>
    <property type="molecule type" value="mRNA"/>
</dbReference>
<dbReference type="SMR" id="Q5W6D6"/>
<dbReference type="FunCoup" id="Q5W6D6">
    <property type="interactions" value="731"/>
</dbReference>
<dbReference type="STRING" id="39947.Q5W6D6"/>
<dbReference type="PaxDb" id="39947-Q5W6D6"/>
<dbReference type="EnsemblPlants" id="Os05t0322900-01">
    <property type="protein sequence ID" value="Os05t0322900-01"/>
    <property type="gene ID" value="Os05g0322900"/>
</dbReference>
<dbReference type="GeneID" id="4338413"/>
<dbReference type="Gramene" id="Os05t0322900-01">
    <property type="protein sequence ID" value="Os05t0322900-01"/>
    <property type="gene ID" value="Os05g0322900"/>
</dbReference>
<dbReference type="KEGG" id="dosa:Os05g0322900"/>
<dbReference type="KEGG" id="osa:4338413"/>
<dbReference type="eggNOG" id="ENOG502RYCZ">
    <property type="taxonomic scope" value="Eukaryota"/>
</dbReference>
<dbReference type="HOGENOM" id="CLU_071943_0_0_1"/>
<dbReference type="InParanoid" id="Q5W6D6"/>
<dbReference type="OMA" id="NRKANCR"/>
<dbReference type="OrthoDB" id="2021064at2759"/>
<dbReference type="PlantReactome" id="R-OSA-6787011">
    <property type="pathway name" value="Jasmonic acid signaling"/>
</dbReference>
<dbReference type="PlantReactome" id="R-OSA-6788019">
    <property type="pathway name" value="Salicylic acid signaling"/>
</dbReference>
<dbReference type="Proteomes" id="UP000000763">
    <property type="component" value="Chromosome 5"/>
</dbReference>
<dbReference type="Proteomes" id="UP000059680">
    <property type="component" value="Chromosome 5"/>
</dbReference>
<dbReference type="ExpressionAtlas" id="Q5W6D6">
    <property type="expression patterns" value="baseline and differential"/>
</dbReference>
<dbReference type="GO" id="GO:0005634">
    <property type="term" value="C:nucleus"/>
    <property type="evidence" value="ECO:0007669"/>
    <property type="project" value="UniProtKB-SubCell"/>
</dbReference>
<dbReference type="GO" id="GO:0003700">
    <property type="term" value="F:DNA-binding transcription factor activity"/>
    <property type="evidence" value="ECO:0000314"/>
    <property type="project" value="UniProtKB"/>
</dbReference>
<dbReference type="GO" id="GO:0043565">
    <property type="term" value="F:sequence-specific DNA binding"/>
    <property type="evidence" value="ECO:0000314"/>
    <property type="project" value="UniProtKB"/>
</dbReference>
<dbReference type="GO" id="GO:0006952">
    <property type="term" value="P:defense response"/>
    <property type="evidence" value="ECO:0007669"/>
    <property type="project" value="UniProtKB-KW"/>
</dbReference>
<dbReference type="GO" id="GO:0009788">
    <property type="term" value="P:negative regulation of abscisic acid-activated signaling pathway"/>
    <property type="evidence" value="ECO:0000314"/>
    <property type="project" value="UniProtKB"/>
</dbReference>
<dbReference type="GO" id="GO:1900425">
    <property type="term" value="P:negative regulation of defense response to bacterium"/>
    <property type="evidence" value="ECO:0000315"/>
    <property type="project" value="UniProtKB"/>
</dbReference>
<dbReference type="GO" id="GO:0080148">
    <property type="term" value="P:negative regulation of response to water deprivation"/>
    <property type="evidence" value="ECO:0000314"/>
    <property type="project" value="UniProtKB"/>
</dbReference>
<dbReference type="GO" id="GO:0080151">
    <property type="term" value="P:positive regulation of salicylic acid mediated signaling pathway"/>
    <property type="evidence" value="ECO:0000314"/>
    <property type="project" value="UniProtKB"/>
</dbReference>
<dbReference type="GO" id="GO:1900150">
    <property type="term" value="P:regulation of defense response to fungus"/>
    <property type="evidence" value="ECO:0000315"/>
    <property type="project" value="UniProtKB"/>
</dbReference>
<dbReference type="GO" id="GO:0006355">
    <property type="term" value="P:regulation of DNA-templated transcription"/>
    <property type="evidence" value="ECO:0000314"/>
    <property type="project" value="UniProtKB"/>
</dbReference>
<dbReference type="GO" id="GO:0009409">
    <property type="term" value="P:response to cold"/>
    <property type="evidence" value="ECO:0000314"/>
    <property type="project" value="UniProtKB"/>
</dbReference>
<dbReference type="Gene3D" id="2.20.25.80">
    <property type="entry name" value="WRKY domain"/>
    <property type="match status" value="1"/>
</dbReference>
<dbReference type="InterPro" id="IPR003657">
    <property type="entry name" value="WRKY_dom"/>
</dbReference>
<dbReference type="InterPro" id="IPR036576">
    <property type="entry name" value="WRKY_dom_sf"/>
</dbReference>
<dbReference type="InterPro" id="IPR044810">
    <property type="entry name" value="WRKY_plant"/>
</dbReference>
<dbReference type="PANTHER" id="PTHR31282">
    <property type="entry name" value="WRKY TRANSCRIPTION FACTOR 21-RELATED"/>
    <property type="match status" value="1"/>
</dbReference>
<dbReference type="Pfam" id="PF03106">
    <property type="entry name" value="WRKY"/>
    <property type="match status" value="1"/>
</dbReference>
<dbReference type="SMART" id="SM00774">
    <property type="entry name" value="WRKY"/>
    <property type="match status" value="1"/>
</dbReference>
<dbReference type="SUPFAM" id="SSF118290">
    <property type="entry name" value="WRKY DNA-binding domain"/>
    <property type="match status" value="1"/>
</dbReference>
<dbReference type="PROSITE" id="PS50811">
    <property type="entry name" value="WRKY"/>
    <property type="match status" value="1"/>
</dbReference>
<feature type="chain" id="PRO_0000453487" description="Transcription factor WRKY45-1">
    <location>
        <begin position="1"/>
        <end position="326"/>
    </location>
</feature>
<feature type="DNA-binding region" description="WRKY" evidence="1">
    <location>
        <begin position="112"/>
        <end position="180"/>
    </location>
</feature>
<feature type="region of interest" description="Disordered" evidence="2">
    <location>
        <begin position="67"/>
        <end position="114"/>
    </location>
</feature>
<feature type="region of interest" description="Disordered" evidence="2">
    <location>
        <begin position="252"/>
        <end position="288"/>
    </location>
</feature>
<feature type="compositionally biased region" description="Gly residues" evidence="2">
    <location>
        <begin position="273"/>
        <end position="283"/>
    </location>
</feature>
<reference key="1">
    <citation type="journal article" date="2004" name="Chin. Sci. Bull.">
        <title>Cloning and analysis of expression profile of 13 WRKY genes in rice.</title>
        <authorList>
            <person name="Qiu Y."/>
            <person name="Jing S."/>
            <person name="Fu J."/>
            <person name="Li L."/>
            <person name="Yu D."/>
        </authorList>
    </citation>
    <scope>NUCLEOTIDE SEQUENCE [MRNA]</scope>
</reference>
<reference key="2">
    <citation type="journal article" date="2009" name="Plant Physiol.">
        <title>A pair of allelic WRKY genes play opposite roles in rice-bacteria interactions.</title>
        <authorList>
            <person name="Tao Z."/>
            <person name="Liu H."/>
            <person name="Qiu D."/>
            <person name="Zhou Y."/>
            <person name="Li X."/>
            <person name="Xu C."/>
            <person name="Wang S."/>
        </authorList>
    </citation>
    <scope>NUCLEOTIDE SEQUENCE [GENOMIC DNA]</scope>
    <scope>FUNCTION</scope>
    <scope>DISRUPTION PHENOTYPE</scope>
</reference>
<reference key="3">
    <citation type="journal article" date="2005" name="Mol. Genet. Genomics">
        <title>A fine physical map of the rice chromosome 5.</title>
        <authorList>
            <person name="Cheng C.-H."/>
            <person name="Chung M.C."/>
            <person name="Liu S.-M."/>
            <person name="Chen S.-K."/>
            <person name="Kao F.Y."/>
            <person name="Lin S.-J."/>
            <person name="Hsiao S.-H."/>
            <person name="Tseng I.C."/>
            <person name="Hsing Y.-I.C."/>
            <person name="Wu H.-P."/>
            <person name="Chen C.-S."/>
            <person name="Shaw J.-F."/>
            <person name="Wu J."/>
            <person name="Matsumoto T."/>
            <person name="Sasaki T."/>
            <person name="Chen H.-C."/>
            <person name="Chow T.-Y."/>
        </authorList>
    </citation>
    <scope>NUCLEOTIDE SEQUENCE [LARGE SCALE GENOMIC DNA]</scope>
    <source>
        <strain>cv. Nipponbare</strain>
    </source>
</reference>
<reference key="4">
    <citation type="journal article" date="2005" name="Nature">
        <title>The map-based sequence of the rice genome.</title>
        <authorList>
            <consortium name="International rice genome sequencing project (IRGSP)"/>
        </authorList>
    </citation>
    <scope>NUCLEOTIDE SEQUENCE [LARGE SCALE GENOMIC DNA]</scope>
    <source>
        <strain>cv. Nipponbare</strain>
    </source>
</reference>
<reference key="5">
    <citation type="journal article" date="2008" name="Nucleic Acids Res.">
        <title>The rice annotation project database (RAP-DB): 2008 update.</title>
        <authorList>
            <consortium name="The rice annotation project (RAP)"/>
        </authorList>
    </citation>
    <scope>GENOME REANNOTATION</scope>
    <source>
        <strain>cv. Nipponbare</strain>
    </source>
</reference>
<reference key="6">
    <citation type="journal article" date="2013" name="Rice">
        <title>Improvement of the Oryza sativa Nipponbare reference genome using next generation sequence and optical map data.</title>
        <authorList>
            <person name="Kawahara Y."/>
            <person name="de la Bastide M."/>
            <person name="Hamilton J.P."/>
            <person name="Kanamori H."/>
            <person name="McCombie W.R."/>
            <person name="Ouyang S."/>
            <person name="Schwartz D.C."/>
            <person name="Tanaka T."/>
            <person name="Wu J."/>
            <person name="Zhou S."/>
            <person name="Childs K.L."/>
            <person name="Davidson R.M."/>
            <person name="Lin H."/>
            <person name="Quesada-Ocampo L."/>
            <person name="Vaillancourt B."/>
            <person name="Sakai H."/>
            <person name="Lee S.S."/>
            <person name="Kim J."/>
            <person name="Numa H."/>
            <person name="Itoh T."/>
            <person name="Buell C.R."/>
            <person name="Matsumoto T."/>
        </authorList>
    </citation>
    <scope>GENOME REANNOTATION</scope>
    <source>
        <strain>cv. Nipponbare</strain>
    </source>
</reference>
<reference key="7">
    <citation type="journal article" date="2003" name="Science">
        <title>Collection, mapping, and annotation of over 28,000 cDNA clones from japonica rice.</title>
        <authorList>
            <consortium name="The rice full-length cDNA consortium"/>
        </authorList>
    </citation>
    <scope>NUCLEOTIDE SEQUENCE [LARGE SCALE MRNA]</scope>
    <source>
        <strain>cv. Nipponbare</strain>
    </source>
</reference>
<reference key="8">
    <citation type="journal article" date="2005" name="Plant Physiol.">
        <title>Annotations and functional analyses of the rice WRKY gene superfamily reveal positive and negative regulators of abscisic acid signaling in aleurone cells.</title>
        <authorList>
            <person name="Xie Z."/>
            <person name="Zhang Z.-L."/>
            <person name="Zou X."/>
            <person name="Huang J."/>
            <person name="Ruas P."/>
            <person name="Thompson D."/>
            <person name="Shen Q.J."/>
        </authorList>
    </citation>
    <scope>TISSUE SPECIFICITY</scope>
    <scope>INDUCTION BY ABSCISIC ACID</scope>
</reference>
<reference key="9">
    <citation type="journal article" date="2006" name="Plant Cell Rep.">
        <title>A comprehensive expression analysis of the WRKY gene superfamily in rice plants during defense response.</title>
        <authorList>
            <person name="Ryu H.-S."/>
            <person name="Han M."/>
            <person name="Lee S.-K."/>
            <person name="Cho J.-I."/>
            <person name="Ryoo N."/>
            <person name="Heu S."/>
            <person name="Lee Y.-H."/>
            <person name="Bhoo S.H."/>
            <person name="Wang G.-L."/>
            <person name="Hahn T.-R."/>
            <person name="Jeon J.-S."/>
        </authorList>
    </citation>
    <scope>INDUCTION</scope>
</reference>
<reference key="10">
    <citation type="journal article" date="2007" name="Plant Cell">
        <title>Rice WRKY45 plays a crucial role in benzothiadiazole-inducible blast resistance.</title>
        <authorList>
            <person name="Shimono M."/>
            <person name="Sugano S."/>
            <person name="Nakayama A."/>
            <person name="Jiang C.-J."/>
            <person name="Ono K."/>
            <person name="Toki S."/>
            <person name="Takatsuji H."/>
        </authorList>
    </citation>
    <scope>FUNCTION</scope>
    <scope>INDUCTION</scope>
    <scope>DISRUPTION PHENOTYPE</scope>
</reference>
<reference key="11">
    <citation type="journal article" date="2010" name="Mol. Plant Microbe Interact.">
        <title>Abscisic acid interacts antagonistically with salicylic acid signaling pathway in rice-Magnaporthe grisea interaction.</title>
        <authorList>
            <person name="Jiang C.J."/>
            <person name="Shimono M."/>
            <person name="Sugano S."/>
            <person name="Kojima M."/>
            <person name="Yazawa K."/>
            <person name="Yoshida R."/>
            <person name="Inoue H."/>
            <person name="Hayashi N."/>
            <person name="Sakakibara H."/>
            <person name="Takatsuji H."/>
        </authorList>
    </citation>
    <scope>FUNCTION</scope>
</reference>
<reference key="12">
    <citation type="journal article" date="2011" name="J. Exp. Bot.">
        <title>OsWRKY45 alleles play different roles in abscisic acid signalling and salt stress tolerance but similar roles in drought and cold tolerance in rice.</title>
        <authorList>
            <person name="Tao Z."/>
            <person name="Kou Y."/>
            <person name="Liu H."/>
            <person name="Li X."/>
            <person name="Xiao J."/>
            <person name="Wang S."/>
        </authorList>
    </citation>
    <scope>FUNCTION</scope>
    <scope>INDUCTION</scope>
</reference>
<reference key="13">
    <citation type="journal article" date="2012" name="Mol. Plant Pathol.">
        <title>Rice WRKY45 plays important roles in fungal and bacterial disease resistance.</title>
        <authorList>
            <person name="Shimono M."/>
            <person name="Koga H."/>
            <person name="Akagi A."/>
            <person name="Hayashi N."/>
            <person name="Goto S."/>
            <person name="Sawada M."/>
            <person name="Kurihara T."/>
            <person name="Matsushita A."/>
            <person name="Sugano S."/>
            <person name="Jiang C.J."/>
            <person name="Kaku H."/>
            <person name="Inoue H."/>
            <person name="Takatsuji H."/>
        </authorList>
    </citation>
    <scope>FUNCTION</scope>
</reference>